<protein>
    <recommendedName>
        <fullName>Autophagy-related protein 18</fullName>
    </recommendedName>
    <alternativeName>
        <fullName>Glucose-induced selective autophagy protein 12</fullName>
    </alternativeName>
</protein>
<dbReference type="EMBL" id="AF368421">
    <property type="protein sequence ID" value="AAL67674.1"/>
    <property type="molecule type" value="Genomic_DNA"/>
</dbReference>
<dbReference type="GO" id="GO:0010008">
    <property type="term" value="C:endosome membrane"/>
    <property type="evidence" value="ECO:0007669"/>
    <property type="project" value="UniProtKB-SubCell"/>
</dbReference>
<dbReference type="GO" id="GO:0034045">
    <property type="term" value="C:phagophore assembly site membrane"/>
    <property type="evidence" value="ECO:0007669"/>
    <property type="project" value="UniProtKB-SubCell"/>
</dbReference>
<dbReference type="GO" id="GO:0005774">
    <property type="term" value="C:vacuolar membrane"/>
    <property type="evidence" value="ECO:0007669"/>
    <property type="project" value="UniProtKB-SubCell"/>
</dbReference>
<dbReference type="GO" id="GO:0006914">
    <property type="term" value="P:autophagy"/>
    <property type="evidence" value="ECO:0007669"/>
    <property type="project" value="UniProtKB-KW"/>
</dbReference>
<dbReference type="GO" id="GO:0015031">
    <property type="term" value="P:protein transport"/>
    <property type="evidence" value="ECO:0007669"/>
    <property type="project" value="UniProtKB-KW"/>
</dbReference>
<dbReference type="Gene3D" id="2.130.10.10">
    <property type="entry name" value="YVTN repeat-like/Quinoprotein amine dehydrogenase"/>
    <property type="match status" value="1"/>
</dbReference>
<dbReference type="InterPro" id="IPR048720">
    <property type="entry name" value="PROPPIN"/>
</dbReference>
<dbReference type="InterPro" id="IPR015943">
    <property type="entry name" value="WD40/YVTN_repeat-like_dom_sf"/>
</dbReference>
<dbReference type="InterPro" id="IPR036322">
    <property type="entry name" value="WD40_repeat_dom_sf"/>
</dbReference>
<dbReference type="InterPro" id="IPR001680">
    <property type="entry name" value="WD40_rpt"/>
</dbReference>
<dbReference type="PANTHER" id="PTHR11227">
    <property type="entry name" value="WD-REPEAT PROTEIN INTERACTING WITH PHOSPHOINOSIDES WIPI -RELATED"/>
    <property type="match status" value="1"/>
</dbReference>
<dbReference type="Pfam" id="PF21032">
    <property type="entry name" value="PROPPIN"/>
    <property type="match status" value="2"/>
</dbReference>
<dbReference type="SMART" id="SM00320">
    <property type="entry name" value="WD40"/>
    <property type="match status" value="2"/>
</dbReference>
<dbReference type="SUPFAM" id="SSF50978">
    <property type="entry name" value="WD40 repeat-like"/>
    <property type="match status" value="1"/>
</dbReference>
<organism>
    <name type="scientific">Komagataella pastoris</name>
    <name type="common">Yeast</name>
    <name type="synonym">Pichia pastoris</name>
    <dbReference type="NCBI Taxonomy" id="4922"/>
    <lineage>
        <taxon>Eukaryota</taxon>
        <taxon>Fungi</taxon>
        <taxon>Dikarya</taxon>
        <taxon>Ascomycota</taxon>
        <taxon>Saccharomycotina</taxon>
        <taxon>Pichiomycetes</taxon>
        <taxon>Pichiales</taxon>
        <taxon>Pichiaceae</taxon>
        <taxon>Komagataella</taxon>
    </lineage>
</organism>
<gene>
    <name type="primary">ATG18</name>
    <name type="synonym">GSA12</name>
</gene>
<reference key="1">
    <citation type="journal article" date="2001" name="Mol. Biol. Cell">
        <title>Cvt18/Gsa12 is required for cytoplasm-to-vacuole transport, pexophagy, and autophagy in Saccharomyces cerevisiae and Pichia pastoris.</title>
        <authorList>
            <person name="Guan J."/>
            <person name="Stromhaug P.E."/>
            <person name="George M.D."/>
            <person name="Habibzadegah-Tari P."/>
            <person name="Bevan A."/>
            <person name="Dunn W.A. Jr."/>
            <person name="Klionsky D.J."/>
        </authorList>
    </citation>
    <scope>NUCLEOTIDE SEQUENCE [GENOMIC DNA]</scope>
    <scope>FUNCTION</scope>
    <scope>SUBCELLULAR LOCATION</scope>
</reference>
<reference key="2">
    <citation type="journal article" date="2001" name="J. Biol. Chem.">
        <title>GSA11 encodes a unique 208-kDa protein required for pexophagy and autophagy in Pichia pastoris.</title>
        <authorList>
            <person name="Stromhaug P.E."/>
            <person name="Bevan A."/>
            <person name="Dunn W.A. Jr."/>
        </authorList>
    </citation>
    <scope>FUNCTION</scope>
</reference>
<reference key="3">
    <citation type="journal article" date="2003" name="Dev. Cell">
        <title>A unified nomenclature for yeast autophagy-related genes.</title>
        <authorList>
            <person name="Klionsky D.J."/>
            <person name="Cregg J.M."/>
            <person name="Dunn W.A. Jr."/>
            <person name="Emr S.D."/>
            <person name="Sakai Y."/>
            <person name="Sandoval I.V."/>
            <person name="Sibirny A."/>
            <person name="Subramani S."/>
            <person name="Thumm M."/>
            <person name="Veenhuis M."/>
            <person name="Ohsumi Y."/>
        </authorList>
    </citation>
    <scope>NOMENCLATURE</scope>
</reference>
<name>ATG18_PICPA</name>
<accession>Q8X1F5</accession>
<comment type="function">
    <text evidence="1 4 5">The PI(3,5)P2 regulatory complex regulates both the synthesis and turnover of phosphatidylinositol 3,5-bisphosphate (PtdIns(3,5)P2). Necessary for proper vacuole morphology. Plays an important role in osmotically-induced vacuole fragmentation. Involved in correct ATG9 trafficking to the pre-autophagosomal structure. Might also be involved in premeiotic DNA replication (By similarity). Required for cytoplasm to vacuole transport (Cvt) vesicle formation, autophagy, glucose-induced micropexophagy and ethanol-induced macropexophagy. Required for the involution of the vacuole that occurs during micropexophagy. Involved in the recruitment of ATG2 to punctate structures when cells are grown on glucose.</text>
</comment>
<comment type="subunit">
    <text evidence="1">Component of the PI(3,5)P2 regulatory complex.</text>
</comment>
<comment type="subcellular location">
    <subcellularLocation>
        <location evidence="1">Preautophagosomal structure membrane</location>
        <topology evidence="1">Peripheral membrane protein</topology>
    </subcellularLocation>
    <subcellularLocation>
        <location evidence="5">Vacuole membrane</location>
        <topology evidence="5">Peripheral membrane protein</topology>
    </subcellularLocation>
    <subcellularLocation>
        <location evidence="1">Endosome membrane</location>
        <topology evidence="1">Peripheral membrane protein</topology>
    </subcellularLocation>
</comment>
<comment type="domain">
    <text evidence="1">The N-terminus might form a beta-propeller domain involved in specific binding to phosphatidylinositol 3,5-bisphosphate (PIP2), leading to the association of the protein to the membrane.</text>
</comment>
<comment type="domain">
    <text evidence="2">The L/FRRG motif is essential for the cytoplasm to vacuole transport (Cvt) pathway, for the recruitment of ATG8 and ATG16 to the PAS in nutrient-rich medium, and for its recruitment to and dissociation from the PAS under starvation conditions.</text>
</comment>
<comment type="similarity">
    <text evidence="6">Belongs to the WD repeat PROPPIN family.</text>
</comment>
<keyword id="KW-0072">Autophagy</keyword>
<keyword id="KW-0967">Endosome</keyword>
<keyword id="KW-0472">Membrane</keyword>
<keyword id="KW-0653">Protein transport</keyword>
<keyword id="KW-0677">Repeat</keyword>
<keyword id="KW-0813">Transport</keyword>
<keyword id="KW-0926">Vacuole</keyword>
<keyword id="KW-0853">WD repeat</keyword>
<evidence type="ECO:0000250" key="1"/>
<evidence type="ECO:0000250" key="2">
    <source>
        <dbReference type="UniProtKB" id="P43601"/>
    </source>
</evidence>
<evidence type="ECO:0000256" key="3">
    <source>
        <dbReference type="SAM" id="MobiDB-lite"/>
    </source>
</evidence>
<evidence type="ECO:0000269" key="4">
    <source>
    </source>
</evidence>
<evidence type="ECO:0000269" key="5">
    <source>
    </source>
</evidence>
<evidence type="ECO:0000305" key="6"/>
<proteinExistence type="inferred from homology"/>
<feature type="chain" id="PRO_0000050871" description="Autophagy-related protein 18">
    <location>
        <begin position="1"/>
        <end position="543"/>
    </location>
</feature>
<feature type="repeat" description="WD 1">
    <location>
        <begin position="225"/>
        <end position="265"/>
    </location>
</feature>
<feature type="repeat" description="WD 2">
    <location>
        <begin position="270"/>
        <end position="309"/>
    </location>
</feature>
<feature type="region of interest" description="Disordered" evidence="3">
    <location>
        <begin position="163"/>
        <end position="200"/>
    </location>
</feature>
<feature type="region of interest" description="Disordered" evidence="3">
    <location>
        <begin position="326"/>
        <end position="408"/>
    </location>
</feature>
<feature type="short sequence motif" description="L/FRRG motif" evidence="2">
    <location>
        <begin position="266"/>
        <end position="270"/>
    </location>
</feature>
<feature type="compositionally biased region" description="Polar residues" evidence="3">
    <location>
        <begin position="173"/>
        <end position="183"/>
    </location>
</feature>
<feature type="compositionally biased region" description="Polar residues" evidence="3">
    <location>
        <begin position="326"/>
        <end position="336"/>
    </location>
</feature>
<feature type="compositionally biased region" description="Acidic residues" evidence="3">
    <location>
        <begin position="343"/>
        <end position="372"/>
    </location>
</feature>
<feature type="compositionally biased region" description="Polar residues" evidence="3">
    <location>
        <begin position="377"/>
        <end position="400"/>
    </location>
</feature>
<sequence length="543" mass="59893">MSQPTDEADKSTGNAQVTHESINFANFNQDSTCVSVGYQSGYKIFNVEPFTKCLSLADTSIGIVEMLFSSSLVAIVGLGELPDSSPRKLKVFNTKRRSIICELTFPTSILAVKMNRERMVVLLEDTIYIYDINTMRILHTIETPSNPEGLIALSSSTENNILAYPSPPKLPNRQETSTKGTTNDNDRSHLENIPENVNANSSNLRNGDVIIFNSHTLQPISVIEAHKAQLSAIALSSDGTLLATASNKGTIVRVFDVETGVKLYQFRRGTYPTKIYCLSFSQDNRFVCASSATETVHIFRLGQDEANNTMPSRWSKNQKLALQRYKQSMKQXQGSKPSSLVDSDSDPDVDELVENDNSDDDELEEDIDDELAEERFNSSLTVPRRVSSTTSLGSYGSQESIGDKIEPHVDSARRSVARMIRRTSQSLGRKAAEKMGPYLHPKFSSLLEPNRHFASLKVPASKDTKTVVAIGNSVGQGELLQLGEHEDVDNSSSTSDSTFHQKLLHVMVVSSEGFFYNFGLDTERGGDCTLLSQYSLLTDVNDG</sequence>